<keyword id="KW-0408">Iron</keyword>
<keyword id="KW-0479">Metal-binding</keyword>
<reference key="1">
    <citation type="submission" date="2008-02" db="EMBL/GenBank/DDBJ databases">
        <title>Complete sequence of Yersinia pseudotuberculosis YPIII.</title>
        <authorList>
            <consortium name="US DOE Joint Genome Institute"/>
            <person name="Copeland A."/>
            <person name="Lucas S."/>
            <person name="Lapidus A."/>
            <person name="Glavina del Rio T."/>
            <person name="Dalin E."/>
            <person name="Tice H."/>
            <person name="Bruce D."/>
            <person name="Goodwin L."/>
            <person name="Pitluck S."/>
            <person name="Munk A.C."/>
            <person name="Brettin T."/>
            <person name="Detter J.C."/>
            <person name="Han C."/>
            <person name="Tapia R."/>
            <person name="Schmutz J."/>
            <person name="Larimer F."/>
            <person name="Land M."/>
            <person name="Hauser L."/>
            <person name="Challacombe J.F."/>
            <person name="Green L."/>
            <person name="Lindler L.E."/>
            <person name="Nikolich M.P."/>
            <person name="Richardson P."/>
        </authorList>
    </citation>
    <scope>NUCLEOTIDE SEQUENCE [LARGE SCALE GENOMIC DNA]</scope>
    <source>
        <strain>YPIII</strain>
    </source>
</reference>
<proteinExistence type="inferred from homology"/>
<gene>
    <name evidence="1" type="primary">iscA</name>
    <name type="ordered locus">YPK_1278</name>
</gene>
<accession>B1JRZ0</accession>
<organism>
    <name type="scientific">Yersinia pseudotuberculosis serotype O:3 (strain YPIII)</name>
    <dbReference type="NCBI Taxonomy" id="502800"/>
    <lineage>
        <taxon>Bacteria</taxon>
        <taxon>Pseudomonadati</taxon>
        <taxon>Pseudomonadota</taxon>
        <taxon>Gammaproteobacteria</taxon>
        <taxon>Enterobacterales</taxon>
        <taxon>Yersiniaceae</taxon>
        <taxon>Yersinia</taxon>
    </lineage>
</organism>
<sequence length="107" mass="11589">MSISISDSAAQRVSAFLNHRGKGLGLRLGVRTSGCSGMAYVLEFVDEINDDDIVFEDKGVKVIIDGKSMVYLDGTELDFVKEGLNEGFKFNNPNVSNECGCGESFNV</sequence>
<name>ISCA_YERPY</name>
<feature type="chain" id="PRO_1000145769" description="Iron-binding protein IscA">
    <location>
        <begin position="1"/>
        <end position="107"/>
    </location>
</feature>
<feature type="binding site" evidence="1">
    <location>
        <position position="35"/>
    </location>
    <ligand>
        <name>Fe cation</name>
        <dbReference type="ChEBI" id="CHEBI:24875"/>
    </ligand>
</feature>
<feature type="binding site" evidence="1">
    <location>
        <position position="99"/>
    </location>
    <ligand>
        <name>Fe cation</name>
        <dbReference type="ChEBI" id="CHEBI:24875"/>
    </ligand>
</feature>
<feature type="binding site" evidence="1">
    <location>
        <position position="101"/>
    </location>
    <ligand>
        <name>Fe cation</name>
        <dbReference type="ChEBI" id="CHEBI:24875"/>
    </ligand>
</feature>
<comment type="function">
    <text evidence="1">Is able to transfer iron-sulfur clusters to apo-ferredoxin. Multiple cycles of [2Fe2S] cluster formation and transfer are observed, suggesting that IscA acts catalytically. Recruits intracellular free iron so as to provide iron for the assembly of transient iron-sulfur cluster in IscU in the presence of IscS, L-cysteine and the thioredoxin reductase system TrxA/TrxB.</text>
</comment>
<comment type="cofactor">
    <cofactor evidence="1">
        <name>Fe cation</name>
        <dbReference type="ChEBI" id="CHEBI:24875"/>
    </cofactor>
    <text evidence="1">Binds 2 iron ions per dimer. The dimer may bind additional iron ions.</text>
</comment>
<comment type="subunit">
    <text evidence="1">Homodimer; may form tetramers and higher multimers.</text>
</comment>
<comment type="similarity">
    <text evidence="1">Belongs to the HesB/IscA family.</text>
</comment>
<protein>
    <recommendedName>
        <fullName evidence="1">Iron-binding protein IscA</fullName>
    </recommendedName>
    <alternativeName>
        <fullName evidence="1">Iron-sulfur cluster assembly protein</fullName>
    </alternativeName>
</protein>
<dbReference type="EMBL" id="CP000950">
    <property type="protein sequence ID" value="ACA67576.1"/>
    <property type="molecule type" value="Genomic_DNA"/>
</dbReference>
<dbReference type="RefSeq" id="WP_002209834.1">
    <property type="nucleotide sequence ID" value="NZ_CP009792.1"/>
</dbReference>
<dbReference type="SMR" id="B1JRZ0"/>
<dbReference type="GeneID" id="96662216"/>
<dbReference type="KEGG" id="ypy:YPK_1278"/>
<dbReference type="PATRIC" id="fig|502800.11.peg.1914"/>
<dbReference type="GO" id="GO:0005829">
    <property type="term" value="C:cytosol"/>
    <property type="evidence" value="ECO:0007669"/>
    <property type="project" value="TreeGrafter"/>
</dbReference>
<dbReference type="GO" id="GO:0051537">
    <property type="term" value="F:2 iron, 2 sulfur cluster binding"/>
    <property type="evidence" value="ECO:0007669"/>
    <property type="project" value="TreeGrafter"/>
</dbReference>
<dbReference type="GO" id="GO:0005506">
    <property type="term" value="F:iron ion binding"/>
    <property type="evidence" value="ECO:0007669"/>
    <property type="project" value="UniProtKB-UniRule"/>
</dbReference>
<dbReference type="GO" id="GO:0016226">
    <property type="term" value="P:iron-sulfur cluster assembly"/>
    <property type="evidence" value="ECO:0007669"/>
    <property type="project" value="UniProtKB-UniRule"/>
</dbReference>
<dbReference type="FunFam" id="2.60.300.12:FF:000001">
    <property type="entry name" value="Iron-binding protein IscA"/>
    <property type="match status" value="1"/>
</dbReference>
<dbReference type="Gene3D" id="2.60.300.12">
    <property type="entry name" value="HesB-like domain"/>
    <property type="match status" value="1"/>
</dbReference>
<dbReference type="HAMAP" id="MF_01429">
    <property type="entry name" value="Fe_S_insert_IscA"/>
    <property type="match status" value="1"/>
</dbReference>
<dbReference type="InterPro" id="IPR050322">
    <property type="entry name" value="Fe-S_cluster_asmbl/transfer"/>
</dbReference>
<dbReference type="InterPro" id="IPR000361">
    <property type="entry name" value="FeS_biogenesis"/>
</dbReference>
<dbReference type="InterPro" id="IPR016092">
    <property type="entry name" value="FeS_cluster_insertion"/>
</dbReference>
<dbReference type="InterPro" id="IPR017870">
    <property type="entry name" value="FeS_cluster_insertion_CS"/>
</dbReference>
<dbReference type="InterPro" id="IPR035903">
    <property type="entry name" value="HesB-like_dom_sf"/>
</dbReference>
<dbReference type="InterPro" id="IPR011302">
    <property type="entry name" value="IscA_proteobacteria"/>
</dbReference>
<dbReference type="NCBIfam" id="TIGR00049">
    <property type="entry name" value="iron-sulfur cluster assembly accessory protein"/>
    <property type="match status" value="1"/>
</dbReference>
<dbReference type="NCBIfam" id="TIGR02011">
    <property type="entry name" value="IscA"/>
    <property type="match status" value="1"/>
</dbReference>
<dbReference type="NCBIfam" id="NF007049">
    <property type="entry name" value="PRK09502.1"/>
    <property type="match status" value="1"/>
</dbReference>
<dbReference type="PANTHER" id="PTHR10072:SF41">
    <property type="entry name" value="IRON-SULFUR CLUSTER ASSEMBLY 1 HOMOLOG, MITOCHONDRIAL"/>
    <property type="match status" value="1"/>
</dbReference>
<dbReference type="PANTHER" id="PTHR10072">
    <property type="entry name" value="IRON-SULFUR CLUSTER ASSEMBLY PROTEIN"/>
    <property type="match status" value="1"/>
</dbReference>
<dbReference type="Pfam" id="PF01521">
    <property type="entry name" value="Fe-S_biosyn"/>
    <property type="match status" value="1"/>
</dbReference>
<dbReference type="SUPFAM" id="SSF89360">
    <property type="entry name" value="HesB-like domain"/>
    <property type="match status" value="1"/>
</dbReference>
<dbReference type="PROSITE" id="PS01152">
    <property type="entry name" value="HESB"/>
    <property type="match status" value="1"/>
</dbReference>
<evidence type="ECO:0000255" key="1">
    <source>
        <dbReference type="HAMAP-Rule" id="MF_01429"/>
    </source>
</evidence>